<gene>
    <name evidence="1" type="primary">hemF</name>
    <name type="ordered locus">PBPRA3572</name>
</gene>
<comment type="function">
    <text evidence="1">Involved in the heme biosynthesis. Catalyzes the aerobic oxidative decarboxylation of propionate groups of rings A and B of coproporphyrinogen-III to yield the vinyl groups in protoporphyrinogen-IX.</text>
</comment>
<comment type="catalytic activity">
    <reaction evidence="1">
        <text>coproporphyrinogen III + O2 + 2 H(+) = protoporphyrinogen IX + 2 CO2 + 2 H2O</text>
        <dbReference type="Rhea" id="RHEA:18257"/>
        <dbReference type="ChEBI" id="CHEBI:15377"/>
        <dbReference type="ChEBI" id="CHEBI:15378"/>
        <dbReference type="ChEBI" id="CHEBI:15379"/>
        <dbReference type="ChEBI" id="CHEBI:16526"/>
        <dbReference type="ChEBI" id="CHEBI:57307"/>
        <dbReference type="ChEBI" id="CHEBI:57309"/>
        <dbReference type="EC" id="1.3.3.3"/>
    </reaction>
</comment>
<comment type="cofactor">
    <cofactor evidence="1">
        <name>a divalent metal cation</name>
        <dbReference type="ChEBI" id="CHEBI:60240"/>
    </cofactor>
</comment>
<comment type="pathway">
    <text evidence="1">Porphyrin-containing compound metabolism; protoporphyrin-IX biosynthesis; protoporphyrinogen-IX from coproporphyrinogen-III (O2 route): step 1/1.</text>
</comment>
<comment type="subunit">
    <text evidence="1">Homodimer.</text>
</comment>
<comment type="subcellular location">
    <subcellularLocation>
        <location evidence="1">Cytoplasm</location>
    </subcellularLocation>
</comment>
<comment type="similarity">
    <text evidence="1">Belongs to the aerobic coproporphyrinogen-III oxidase family.</text>
</comment>
<keyword id="KW-0963">Cytoplasm</keyword>
<keyword id="KW-0350">Heme biosynthesis</keyword>
<keyword id="KW-0479">Metal-binding</keyword>
<keyword id="KW-0560">Oxidoreductase</keyword>
<keyword id="KW-0627">Porphyrin biosynthesis</keyword>
<keyword id="KW-1185">Reference proteome</keyword>
<feature type="chain" id="PRO_0000109906" description="Oxygen-dependent coproporphyrinogen-III oxidase">
    <location>
        <begin position="1"/>
        <end position="301"/>
    </location>
</feature>
<feature type="region of interest" description="Important for dimerization" evidence="1">
    <location>
        <begin position="242"/>
        <end position="277"/>
    </location>
</feature>
<feature type="active site" description="Proton donor" evidence="1">
    <location>
        <position position="108"/>
    </location>
</feature>
<feature type="binding site" evidence="1">
    <location>
        <position position="94"/>
    </location>
    <ligand>
        <name>substrate</name>
    </ligand>
</feature>
<feature type="binding site" evidence="1">
    <location>
        <position position="98"/>
    </location>
    <ligand>
        <name>a divalent metal cation</name>
        <dbReference type="ChEBI" id="CHEBI:60240"/>
    </ligand>
</feature>
<feature type="binding site" evidence="1">
    <location>
        <position position="108"/>
    </location>
    <ligand>
        <name>a divalent metal cation</name>
        <dbReference type="ChEBI" id="CHEBI:60240"/>
    </ligand>
</feature>
<feature type="binding site" evidence="1">
    <location>
        <begin position="110"/>
        <end position="112"/>
    </location>
    <ligand>
        <name>substrate</name>
    </ligand>
</feature>
<feature type="binding site" evidence="1">
    <location>
        <position position="147"/>
    </location>
    <ligand>
        <name>a divalent metal cation</name>
        <dbReference type="ChEBI" id="CHEBI:60240"/>
    </ligand>
</feature>
<feature type="binding site" evidence="1">
    <location>
        <position position="177"/>
    </location>
    <ligand>
        <name>a divalent metal cation</name>
        <dbReference type="ChEBI" id="CHEBI:60240"/>
    </ligand>
</feature>
<feature type="binding site" evidence="1">
    <location>
        <begin position="260"/>
        <end position="262"/>
    </location>
    <ligand>
        <name>substrate</name>
    </ligand>
</feature>
<feature type="site" description="Important for dimerization" evidence="1">
    <location>
        <position position="177"/>
    </location>
</feature>
<organism>
    <name type="scientific">Photobacterium profundum (strain SS9)</name>
    <dbReference type="NCBI Taxonomy" id="298386"/>
    <lineage>
        <taxon>Bacteria</taxon>
        <taxon>Pseudomonadati</taxon>
        <taxon>Pseudomonadota</taxon>
        <taxon>Gammaproteobacteria</taxon>
        <taxon>Vibrionales</taxon>
        <taxon>Vibrionaceae</taxon>
        <taxon>Photobacterium</taxon>
    </lineage>
</organism>
<proteinExistence type="inferred from homology"/>
<name>HEM6_PHOPR</name>
<sequence length="301" mass="34737">MEHVDKHAVKAFLLSLQDQICQSLESQDKSAAFEQDEWQREQGGGGRSRVLRQGSVFEQAGVNFSHVFGTKMPASATAHRPELAGRSFEAMGVSLVIHPNNPYIPTSHANVRFFIAEKEGEAPVWWFGGGFDLTPFYPFEEDCQHWHNTAKYLCAPFGDDIYEQHKVWCDKYFFLPHRNETRGVGGLFFDDLNEWGFEKSFAYTQAVGNGFIDGYLPIVQRRQDTPYGEREREFQLYRRGRYVEFNLVYDRGTLFGLQSGGRTESILMSMPPLARWEYCYEPKAGSAEADLYENYLQPREW</sequence>
<protein>
    <recommendedName>
        <fullName evidence="1">Oxygen-dependent coproporphyrinogen-III oxidase</fullName>
        <shortName evidence="1">CPO</shortName>
        <shortName evidence="1">Coprogen oxidase</shortName>
        <shortName evidence="1">Coproporphyrinogenase</shortName>
        <ecNumber evidence="1">1.3.3.3</ecNumber>
    </recommendedName>
</protein>
<evidence type="ECO:0000255" key="1">
    <source>
        <dbReference type="HAMAP-Rule" id="MF_00333"/>
    </source>
</evidence>
<dbReference type="EC" id="1.3.3.3" evidence="1"/>
<dbReference type="EMBL" id="CR378674">
    <property type="protein sequence ID" value="CAG21828.1"/>
    <property type="molecule type" value="Genomic_DNA"/>
</dbReference>
<dbReference type="RefSeq" id="WP_011220065.1">
    <property type="nucleotide sequence ID" value="NC_006370.1"/>
</dbReference>
<dbReference type="SMR" id="Q6LLK0"/>
<dbReference type="STRING" id="298386.PBPRA3572"/>
<dbReference type="KEGG" id="ppr:PBPRA3572"/>
<dbReference type="eggNOG" id="COG0408">
    <property type="taxonomic scope" value="Bacteria"/>
</dbReference>
<dbReference type="HOGENOM" id="CLU_026169_0_1_6"/>
<dbReference type="UniPathway" id="UPA00251">
    <property type="reaction ID" value="UER00322"/>
</dbReference>
<dbReference type="Proteomes" id="UP000000593">
    <property type="component" value="Chromosome 1"/>
</dbReference>
<dbReference type="GO" id="GO:0005737">
    <property type="term" value="C:cytoplasm"/>
    <property type="evidence" value="ECO:0007669"/>
    <property type="project" value="UniProtKB-SubCell"/>
</dbReference>
<dbReference type="GO" id="GO:0004109">
    <property type="term" value="F:coproporphyrinogen oxidase activity"/>
    <property type="evidence" value="ECO:0007669"/>
    <property type="project" value="UniProtKB-UniRule"/>
</dbReference>
<dbReference type="GO" id="GO:0046872">
    <property type="term" value="F:metal ion binding"/>
    <property type="evidence" value="ECO:0007669"/>
    <property type="project" value="UniProtKB-KW"/>
</dbReference>
<dbReference type="GO" id="GO:0042803">
    <property type="term" value="F:protein homodimerization activity"/>
    <property type="evidence" value="ECO:0000250"/>
    <property type="project" value="UniProtKB"/>
</dbReference>
<dbReference type="GO" id="GO:0006782">
    <property type="term" value="P:protoporphyrinogen IX biosynthetic process"/>
    <property type="evidence" value="ECO:0007669"/>
    <property type="project" value="UniProtKB-UniRule"/>
</dbReference>
<dbReference type="FunFam" id="3.40.1500.10:FF:000001">
    <property type="entry name" value="Oxygen-dependent coproporphyrinogen-III oxidase"/>
    <property type="match status" value="1"/>
</dbReference>
<dbReference type="Gene3D" id="3.40.1500.10">
    <property type="entry name" value="Coproporphyrinogen III oxidase, aerobic"/>
    <property type="match status" value="1"/>
</dbReference>
<dbReference type="HAMAP" id="MF_00333">
    <property type="entry name" value="Coprogen_oxidas"/>
    <property type="match status" value="1"/>
</dbReference>
<dbReference type="InterPro" id="IPR001260">
    <property type="entry name" value="Coprogen_oxidase_aer"/>
</dbReference>
<dbReference type="InterPro" id="IPR036406">
    <property type="entry name" value="Coprogen_oxidase_aer_sf"/>
</dbReference>
<dbReference type="InterPro" id="IPR018375">
    <property type="entry name" value="Coprogen_oxidase_CS"/>
</dbReference>
<dbReference type="NCBIfam" id="NF003727">
    <property type="entry name" value="PRK05330.1"/>
    <property type="match status" value="1"/>
</dbReference>
<dbReference type="PANTHER" id="PTHR10755">
    <property type="entry name" value="COPROPORPHYRINOGEN III OXIDASE, MITOCHONDRIAL"/>
    <property type="match status" value="1"/>
</dbReference>
<dbReference type="PANTHER" id="PTHR10755:SF0">
    <property type="entry name" value="OXYGEN-DEPENDENT COPROPORPHYRINOGEN-III OXIDASE, MITOCHONDRIAL"/>
    <property type="match status" value="1"/>
</dbReference>
<dbReference type="Pfam" id="PF01218">
    <property type="entry name" value="Coprogen_oxidas"/>
    <property type="match status" value="1"/>
</dbReference>
<dbReference type="PIRSF" id="PIRSF000166">
    <property type="entry name" value="Coproporphyri_ox"/>
    <property type="match status" value="1"/>
</dbReference>
<dbReference type="PRINTS" id="PR00073">
    <property type="entry name" value="COPRGNOXDASE"/>
</dbReference>
<dbReference type="SUPFAM" id="SSF102886">
    <property type="entry name" value="Coproporphyrinogen III oxidase"/>
    <property type="match status" value="1"/>
</dbReference>
<dbReference type="PROSITE" id="PS01021">
    <property type="entry name" value="COPROGEN_OXIDASE"/>
    <property type="match status" value="1"/>
</dbReference>
<accession>Q6LLK0</accession>
<reference key="1">
    <citation type="journal article" date="2005" name="Science">
        <title>Life at depth: Photobacterium profundum genome sequence and expression analysis.</title>
        <authorList>
            <person name="Vezzi A."/>
            <person name="Campanaro S."/>
            <person name="D'Angelo M."/>
            <person name="Simonato F."/>
            <person name="Vitulo N."/>
            <person name="Lauro F.M."/>
            <person name="Cestaro A."/>
            <person name="Malacrida G."/>
            <person name="Simionati B."/>
            <person name="Cannata N."/>
            <person name="Romualdi C."/>
            <person name="Bartlett D.H."/>
            <person name="Valle G."/>
        </authorList>
    </citation>
    <scope>NUCLEOTIDE SEQUENCE [LARGE SCALE GENOMIC DNA]</scope>
    <source>
        <strain>ATCC BAA-1253 / SS9</strain>
    </source>
</reference>